<gene>
    <name evidence="1" type="primary">pcm</name>
    <name type="ordered locus">VV2811</name>
</gene>
<protein>
    <recommendedName>
        <fullName evidence="1">Protein-L-isoaspartate O-methyltransferase</fullName>
        <ecNumber evidence="1">2.1.1.77</ecNumber>
    </recommendedName>
    <alternativeName>
        <fullName evidence="1">L-isoaspartyl protein carboxyl methyltransferase</fullName>
    </alternativeName>
    <alternativeName>
        <fullName evidence="1">Protein L-isoaspartyl methyltransferase</fullName>
    </alternativeName>
    <alternativeName>
        <fullName evidence="1">Protein-beta-aspartate methyltransferase</fullName>
        <shortName evidence="1">PIMT</shortName>
    </alternativeName>
</protein>
<comment type="function">
    <text evidence="1">Catalyzes the methyl esterification of L-isoaspartyl residues in peptides and proteins that result from spontaneous decomposition of normal L-aspartyl and L-asparaginyl residues. It plays a role in the repair and/or degradation of damaged proteins.</text>
</comment>
<comment type="catalytic activity">
    <reaction evidence="1">
        <text>[protein]-L-isoaspartate + S-adenosyl-L-methionine = [protein]-L-isoaspartate alpha-methyl ester + S-adenosyl-L-homocysteine</text>
        <dbReference type="Rhea" id="RHEA:12705"/>
        <dbReference type="Rhea" id="RHEA-COMP:12143"/>
        <dbReference type="Rhea" id="RHEA-COMP:12144"/>
        <dbReference type="ChEBI" id="CHEBI:57856"/>
        <dbReference type="ChEBI" id="CHEBI:59789"/>
        <dbReference type="ChEBI" id="CHEBI:90596"/>
        <dbReference type="ChEBI" id="CHEBI:90598"/>
        <dbReference type="EC" id="2.1.1.77"/>
    </reaction>
</comment>
<comment type="subcellular location">
    <subcellularLocation>
        <location evidence="1">Cytoplasm</location>
    </subcellularLocation>
</comment>
<comment type="similarity">
    <text evidence="1">Belongs to the methyltransferase superfamily. L-isoaspartyl/D-aspartyl protein methyltransferase family.</text>
</comment>
<evidence type="ECO:0000255" key="1">
    <source>
        <dbReference type="HAMAP-Rule" id="MF_00090"/>
    </source>
</evidence>
<accession>Q7MHQ8</accession>
<dbReference type="EC" id="2.1.1.77" evidence="1"/>
<dbReference type="EMBL" id="BA000037">
    <property type="protein sequence ID" value="BAC95575.1"/>
    <property type="molecule type" value="Genomic_DNA"/>
</dbReference>
<dbReference type="RefSeq" id="WP_011079519.1">
    <property type="nucleotide sequence ID" value="NC_005139.1"/>
</dbReference>
<dbReference type="SMR" id="Q7MHQ8"/>
<dbReference type="STRING" id="672.VV93_v1c25210"/>
<dbReference type="KEGG" id="vvy:VV2811"/>
<dbReference type="PATRIC" id="fig|196600.6.peg.2801"/>
<dbReference type="eggNOG" id="COG2518">
    <property type="taxonomic scope" value="Bacteria"/>
</dbReference>
<dbReference type="HOGENOM" id="CLU_055432_2_0_6"/>
<dbReference type="Proteomes" id="UP000002675">
    <property type="component" value="Chromosome I"/>
</dbReference>
<dbReference type="GO" id="GO:0005737">
    <property type="term" value="C:cytoplasm"/>
    <property type="evidence" value="ECO:0007669"/>
    <property type="project" value="UniProtKB-SubCell"/>
</dbReference>
<dbReference type="GO" id="GO:0004719">
    <property type="term" value="F:protein-L-isoaspartate (D-aspartate) O-methyltransferase activity"/>
    <property type="evidence" value="ECO:0007669"/>
    <property type="project" value="UniProtKB-UniRule"/>
</dbReference>
<dbReference type="GO" id="GO:0032259">
    <property type="term" value="P:methylation"/>
    <property type="evidence" value="ECO:0007669"/>
    <property type="project" value="UniProtKB-KW"/>
</dbReference>
<dbReference type="GO" id="GO:0036211">
    <property type="term" value="P:protein modification process"/>
    <property type="evidence" value="ECO:0007669"/>
    <property type="project" value="UniProtKB-UniRule"/>
</dbReference>
<dbReference type="GO" id="GO:0030091">
    <property type="term" value="P:protein repair"/>
    <property type="evidence" value="ECO:0007669"/>
    <property type="project" value="UniProtKB-UniRule"/>
</dbReference>
<dbReference type="CDD" id="cd02440">
    <property type="entry name" value="AdoMet_MTases"/>
    <property type="match status" value="1"/>
</dbReference>
<dbReference type="FunFam" id="3.40.50.150:FF:000010">
    <property type="entry name" value="Protein-L-isoaspartate O-methyltransferase"/>
    <property type="match status" value="1"/>
</dbReference>
<dbReference type="Gene3D" id="3.40.50.150">
    <property type="entry name" value="Vaccinia Virus protein VP39"/>
    <property type="match status" value="1"/>
</dbReference>
<dbReference type="HAMAP" id="MF_00090">
    <property type="entry name" value="PIMT"/>
    <property type="match status" value="1"/>
</dbReference>
<dbReference type="InterPro" id="IPR000682">
    <property type="entry name" value="PCMT"/>
</dbReference>
<dbReference type="InterPro" id="IPR029063">
    <property type="entry name" value="SAM-dependent_MTases_sf"/>
</dbReference>
<dbReference type="NCBIfam" id="TIGR00080">
    <property type="entry name" value="pimt"/>
    <property type="match status" value="1"/>
</dbReference>
<dbReference type="NCBIfam" id="NF001453">
    <property type="entry name" value="PRK00312.1"/>
    <property type="match status" value="1"/>
</dbReference>
<dbReference type="PANTHER" id="PTHR11579">
    <property type="entry name" value="PROTEIN-L-ISOASPARTATE O-METHYLTRANSFERASE"/>
    <property type="match status" value="1"/>
</dbReference>
<dbReference type="PANTHER" id="PTHR11579:SF0">
    <property type="entry name" value="PROTEIN-L-ISOASPARTATE(D-ASPARTATE) O-METHYLTRANSFERASE"/>
    <property type="match status" value="1"/>
</dbReference>
<dbReference type="Pfam" id="PF01135">
    <property type="entry name" value="PCMT"/>
    <property type="match status" value="1"/>
</dbReference>
<dbReference type="SUPFAM" id="SSF53335">
    <property type="entry name" value="S-adenosyl-L-methionine-dependent methyltransferases"/>
    <property type="match status" value="1"/>
</dbReference>
<dbReference type="PROSITE" id="PS01279">
    <property type="entry name" value="PCMT"/>
    <property type="match status" value="1"/>
</dbReference>
<sequence length="208" mass="23074">MSNPQAERLVHFLAVNGIRDSEVLSAIARVPRECFLSQAMMHQAYDNNALPIGQGQTISQPYIVAKMTELLRLKRDSKVLEIGTGSGYQTAVLALLVEHVYSVERIKSLQWDAKRRLKQLDIYNVSTKHGDGWLGWENKGPFDAIIVTAAAESVPPVLLQQLNDGGRMVLPVGTDEQQLILIERQKDQFVSQVIEAVNFVPLIAGDLA</sequence>
<feature type="chain" id="PRO_0000111909" description="Protein-L-isoaspartate O-methyltransferase">
    <location>
        <begin position="1"/>
        <end position="208"/>
    </location>
</feature>
<feature type="active site" evidence="1">
    <location>
        <position position="59"/>
    </location>
</feature>
<name>PIMT_VIBVY</name>
<proteinExistence type="inferred from homology"/>
<keyword id="KW-0963">Cytoplasm</keyword>
<keyword id="KW-0489">Methyltransferase</keyword>
<keyword id="KW-0949">S-adenosyl-L-methionine</keyword>
<keyword id="KW-0808">Transferase</keyword>
<reference key="1">
    <citation type="journal article" date="2003" name="Genome Res.">
        <title>Comparative genome analysis of Vibrio vulnificus, a marine pathogen.</title>
        <authorList>
            <person name="Chen C.-Y."/>
            <person name="Wu K.-M."/>
            <person name="Chang Y.-C."/>
            <person name="Chang C.-H."/>
            <person name="Tsai H.-C."/>
            <person name="Liao T.-L."/>
            <person name="Liu Y.-M."/>
            <person name="Chen H.-J."/>
            <person name="Shen A.B.-T."/>
            <person name="Li J.-C."/>
            <person name="Su T.-L."/>
            <person name="Shao C.-P."/>
            <person name="Lee C.-T."/>
            <person name="Hor L.-I."/>
            <person name="Tsai S.-F."/>
        </authorList>
    </citation>
    <scope>NUCLEOTIDE SEQUENCE [LARGE SCALE GENOMIC DNA]</scope>
    <source>
        <strain>YJ016</strain>
    </source>
</reference>
<organism>
    <name type="scientific">Vibrio vulnificus (strain YJ016)</name>
    <dbReference type="NCBI Taxonomy" id="196600"/>
    <lineage>
        <taxon>Bacteria</taxon>
        <taxon>Pseudomonadati</taxon>
        <taxon>Pseudomonadota</taxon>
        <taxon>Gammaproteobacteria</taxon>
        <taxon>Vibrionales</taxon>
        <taxon>Vibrionaceae</taxon>
        <taxon>Vibrio</taxon>
    </lineage>
</organism>